<gene>
    <name evidence="1" type="primary">mtrF</name>
    <name type="ordered locus">Mbar_A1257</name>
</gene>
<feature type="chain" id="PRO_0000147547" description="Tetrahydromethanopterin S-methyltransferase subunit F">
    <location>
        <begin position="1"/>
        <end position="73"/>
    </location>
</feature>
<feature type="transmembrane region" description="Helical" evidence="1">
    <location>
        <begin position="52"/>
        <end position="72"/>
    </location>
</feature>
<protein>
    <recommendedName>
        <fullName evidence="1">Tetrahydromethanopterin S-methyltransferase subunit F</fullName>
        <ecNumber evidence="1">7.2.1.4</ecNumber>
    </recommendedName>
    <alternativeName>
        <fullName evidence="1">N5-methyltetrahydromethanopterin--coenzyme M methyltransferase subunit F</fullName>
    </alternativeName>
</protein>
<comment type="function">
    <text evidence="1">Part of a complex that catalyzes the formation of methyl-coenzyme M and tetrahydromethanopterin from coenzyme M and methyl-tetrahydromethanopterin. This is an energy-conserving, sodium-ion translocating step.</text>
</comment>
<comment type="catalytic activity">
    <reaction evidence="1">
        <text>5-methyl-5,6,7,8-tetrahydromethanopterin + coenzyme M + 2 Na(+)(in) = 5,6,7,8-tetrahydromethanopterin + methyl-coenzyme M + 2 Na(+)(out)</text>
        <dbReference type="Rhea" id="RHEA:53492"/>
        <dbReference type="ChEBI" id="CHEBI:29101"/>
        <dbReference type="ChEBI" id="CHEBI:58103"/>
        <dbReference type="ChEBI" id="CHEBI:58116"/>
        <dbReference type="ChEBI" id="CHEBI:58286"/>
        <dbReference type="ChEBI" id="CHEBI:58319"/>
        <dbReference type="EC" id="7.2.1.4"/>
    </reaction>
</comment>
<comment type="pathway">
    <text evidence="1">One-carbon metabolism; methanogenesis from CO(2); methyl-coenzyme M from 5,10-methylene-5,6,7,8-tetrahydromethanopterin: step 2/2.</text>
</comment>
<comment type="subunit">
    <text evidence="1">The complex is composed of 8 subunits; MtrA, MtrB, MtrC, MtrD, MtrE, MtrF, MtrG and MtrH.</text>
</comment>
<comment type="subcellular location">
    <subcellularLocation>
        <location evidence="1">Cell membrane</location>
        <topology evidence="1">Single-pass membrane protein</topology>
    </subcellularLocation>
</comment>
<comment type="similarity">
    <text evidence="1">Belongs to the MtrF family.</text>
</comment>
<evidence type="ECO:0000255" key="1">
    <source>
        <dbReference type="HAMAP-Rule" id="MF_01099"/>
    </source>
</evidence>
<accession>Q9Y8K5</accession>
<accession>Q46D22</accession>
<keyword id="KW-1003">Cell membrane</keyword>
<keyword id="KW-0472">Membrane</keyword>
<keyword id="KW-0484">Methanogenesis</keyword>
<keyword id="KW-0489">Methyltransferase</keyword>
<keyword id="KW-0554">One-carbon metabolism</keyword>
<keyword id="KW-0808">Transferase</keyword>
<keyword id="KW-1278">Translocase</keyword>
<keyword id="KW-0812">Transmembrane</keyword>
<keyword id="KW-1133">Transmembrane helix</keyword>
<name>MTRF_METBF</name>
<sequence>MKVAEEYDKGVPMMLAPQMGAIDATVESIRYRAQLIARNQKLDSGVAATGMIGFAAGFLFSLLMVIVLPLLFW</sequence>
<proteinExistence type="inferred from homology"/>
<reference key="1">
    <citation type="journal article" date="1999" name="FEBS Lett.">
        <title>The energy conserving methyltetrahydromethanopterin:coenzyme M methyltransferase complex from methanogenic archaea: function of the subunit MtrH.</title>
        <authorList>
            <person name="Hippler B."/>
            <person name="Thauer R.K."/>
        </authorList>
    </citation>
    <scope>NUCLEOTIDE SEQUENCE [GENOMIC DNA]</scope>
</reference>
<reference key="2">
    <citation type="journal article" date="2006" name="J. Bacteriol.">
        <title>The Methanosarcina barkeri genome: comparative analysis with Methanosarcina acetivorans and Methanosarcina mazei reveals extensive rearrangement within methanosarcinal genomes.</title>
        <authorList>
            <person name="Maeder D.L."/>
            <person name="Anderson I."/>
            <person name="Brettin T.S."/>
            <person name="Bruce D.C."/>
            <person name="Gilna P."/>
            <person name="Han C.S."/>
            <person name="Lapidus A."/>
            <person name="Metcalf W.W."/>
            <person name="Saunders E."/>
            <person name="Tapia R."/>
            <person name="Sowers K.R."/>
        </authorList>
    </citation>
    <scope>NUCLEOTIDE SEQUENCE [LARGE SCALE GENOMIC DNA]</scope>
    <source>
        <strain>Fusaro / DSM 804</strain>
    </source>
</reference>
<dbReference type="EC" id="7.2.1.4" evidence="1"/>
<dbReference type="EMBL" id="AJ132817">
    <property type="protein sequence ID" value="CAB41643.1"/>
    <property type="molecule type" value="Genomic_DNA"/>
</dbReference>
<dbReference type="EMBL" id="CP000099">
    <property type="protein sequence ID" value="AAZ70220.1"/>
    <property type="molecule type" value="Genomic_DNA"/>
</dbReference>
<dbReference type="SMR" id="Q9Y8K5"/>
<dbReference type="STRING" id="269797.Mbar_A1257"/>
<dbReference type="PaxDb" id="269797-Mbar_A1257"/>
<dbReference type="KEGG" id="mba:Mbar_A1257"/>
<dbReference type="eggNOG" id="arCOG03381">
    <property type="taxonomic scope" value="Archaea"/>
</dbReference>
<dbReference type="HOGENOM" id="CLU_188097_0_0_2"/>
<dbReference type="OrthoDB" id="74731at2157"/>
<dbReference type="UniPathway" id="UPA00640">
    <property type="reaction ID" value="UER00698"/>
</dbReference>
<dbReference type="GO" id="GO:0005886">
    <property type="term" value="C:plasma membrane"/>
    <property type="evidence" value="ECO:0007669"/>
    <property type="project" value="UniProtKB-SubCell"/>
</dbReference>
<dbReference type="GO" id="GO:0030269">
    <property type="term" value="F:tetrahydromethanopterin S-methyltransferase activity"/>
    <property type="evidence" value="ECO:0007669"/>
    <property type="project" value="UniProtKB-UniRule"/>
</dbReference>
<dbReference type="GO" id="GO:0019386">
    <property type="term" value="P:methanogenesis, from carbon dioxide"/>
    <property type="evidence" value="ECO:0007669"/>
    <property type="project" value="UniProtKB-UniRule"/>
</dbReference>
<dbReference type="GO" id="GO:0032259">
    <property type="term" value="P:methylation"/>
    <property type="evidence" value="ECO:0007669"/>
    <property type="project" value="UniProtKB-KW"/>
</dbReference>
<dbReference type="GO" id="GO:0006730">
    <property type="term" value="P:one-carbon metabolic process"/>
    <property type="evidence" value="ECO:0007669"/>
    <property type="project" value="UniProtKB-UniRule"/>
</dbReference>
<dbReference type="HAMAP" id="MF_01099">
    <property type="entry name" value="MtrF"/>
    <property type="match status" value="1"/>
</dbReference>
<dbReference type="InterPro" id="IPR011307">
    <property type="entry name" value="MeTrfase_F"/>
</dbReference>
<dbReference type="InterPro" id="IPR013347">
    <property type="entry name" value="MeTrfase_F_su"/>
</dbReference>
<dbReference type="NCBIfam" id="TIGR02507">
    <property type="entry name" value="MtrF"/>
    <property type="match status" value="1"/>
</dbReference>
<dbReference type="NCBIfam" id="NF009776">
    <property type="entry name" value="PRK13275.1"/>
    <property type="match status" value="1"/>
</dbReference>
<dbReference type="Pfam" id="PF09472">
    <property type="entry name" value="MtrF"/>
    <property type="match status" value="1"/>
</dbReference>
<dbReference type="PIRSF" id="PIRSF006523">
    <property type="entry name" value="MtrF"/>
    <property type="match status" value="1"/>
</dbReference>
<organism>
    <name type="scientific">Methanosarcina barkeri (strain Fusaro / DSM 804)</name>
    <dbReference type="NCBI Taxonomy" id="269797"/>
    <lineage>
        <taxon>Archaea</taxon>
        <taxon>Methanobacteriati</taxon>
        <taxon>Methanobacteriota</taxon>
        <taxon>Stenosarchaea group</taxon>
        <taxon>Methanomicrobia</taxon>
        <taxon>Methanosarcinales</taxon>
        <taxon>Methanosarcinaceae</taxon>
        <taxon>Methanosarcina</taxon>
    </lineage>
</organism>